<proteinExistence type="evidence at protein level"/>
<reference key="1">
    <citation type="submission" date="2010-05" db="EMBL/GenBank/DDBJ databases">
        <authorList>
            <person name="Weinstock G."/>
            <person name="Sodergren E."/>
            <person name="Clifton S."/>
            <person name="Fulton L."/>
            <person name="Fulton B."/>
            <person name="Courtney L."/>
            <person name="Fronick C."/>
            <person name="Harrison M."/>
            <person name="Strong C."/>
            <person name="Farmer C."/>
            <person name="Delahaunty K."/>
            <person name="Markovic C."/>
            <person name="Hall O."/>
            <person name="Minx P."/>
            <person name="Tomlinson C."/>
            <person name="Mitreva M."/>
            <person name="Hou S."/>
            <person name="Chen J."/>
            <person name="Wollam A."/>
            <person name="Pepin K.H."/>
            <person name="Johnson M."/>
            <person name="Bhonagiri V."/>
            <person name="Zhang X."/>
            <person name="Suruliraj S."/>
            <person name="Warren W."/>
            <person name="Chinwalla A."/>
            <person name="Mardis E.R."/>
            <person name="Wilson R.K."/>
        </authorList>
    </citation>
    <scope>NUCLEOTIDE SEQUENCE [LARGE SCALE GENOMIC DNA]</scope>
    <source>
        <strain>MS 115-1</strain>
    </source>
</reference>
<reference key="2">
    <citation type="journal article" date="2020" name="Mol. Cell">
        <title>HORMA Domain Proteins and a Trip13-like ATPase Regulate Bacterial cGAS-like Enzymes to Mediate Bacteriophage Immunity.</title>
        <authorList>
            <person name="Ye Q."/>
            <person name="Lau R.K."/>
            <person name="Mathews I.T."/>
            <person name="Birkholz E.A."/>
            <person name="Watrous J.D."/>
            <person name="Azimi C.S."/>
            <person name="Pogliano J."/>
            <person name="Jain M."/>
            <person name="Corbett K.D."/>
        </authorList>
    </citation>
    <scope>FUNCTION</scope>
    <scope>ACTIVITY REGULATION</scope>
    <scope>SUBUNIT</scope>
    <scope>MUTAGENESIS OF ASP-73</scope>
    <source>
        <strain>MS 115-1</strain>
    </source>
</reference>
<reference key="3">
    <citation type="journal article" date="2020" name="Nat. Microbiol.">
        <title>Diversity and classification of cyclic-oligonucleotide-based anti-phage signalling systems.</title>
        <authorList>
            <person name="Millman A."/>
            <person name="Melamed S."/>
            <person name="Amitai G."/>
            <person name="Sorek R."/>
        </authorList>
    </citation>
    <scope>CLASSIFICATION AND NOMENCLATURE</scope>
</reference>
<reference evidence="7 8 9" key="4">
    <citation type="journal article" date="2020" name="Mol. Cell">
        <title>Structure and Mechanism of a Cyclic Trinucleotide-Activated Bacterial Endonuclease Mediating Bacteriophage Immunity.</title>
        <authorList>
            <person name="Lau R.K."/>
            <person name="Ye Q."/>
            <person name="Birkholz E.A."/>
            <person name="Berg K.R."/>
            <person name="Patel L."/>
            <person name="Mathews I.T."/>
            <person name="Watrous J.D."/>
            <person name="Ego K."/>
            <person name="Whiteley A.T."/>
            <person name="Lowey B."/>
            <person name="Mekalanos J.J."/>
            <person name="Kranzusch P.J."/>
            <person name="Jain M."/>
            <person name="Pogliano J."/>
            <person name="Corbett K.D."/>
        </authorList>
    </citation>
    <scope>X-RAY CRYSTALLOGRAPHY (1.66 ANGSTROMS) OF 2-240 IN COMPLEX WITH MAGNESIUM AND IN COMPLEX WITH SECOND MESSENGERS</scope>
    <scope>FUNCTION</scope>
    <scope>POSSIBLE ACTIVE SITES</scope>
    <scope>COFACTOR</scope>
    <scope>SUBUNIT</scope>
    <scope>MUTAGENESIS OF TRP-4; LEU-19; ALA-27; PHE-28; ARG-53; ASP-73; TYR-81; HIS-136; TYR-141 AND THR-226</scope>
    <source>
        <strain>MS 115-1</strain>
    </source>
</reference>
<keyword id="KW-0002">3D-structure</keyword>
<keyword id="KW-0051">Antiviral defense</keyword>
<keyword id="KW-0255">Endonuclease</keyword>
<keyword id="KW-0378">Hydrolase</keyword>
<keyword id="KW-0460">Magnesium</keyword>
<keyword id="KW-0479">Metal-binding</keyword>
<keyword id="KW-0540">Nuclease</keyword>
<keyword id="KW-0547">Nucleotide-binding</keyword>
<evidence type="ECO:0000269" key="1">
    <source>
    </source>
</evidence>
<evidence type="ECO:0000269" key="2">
    <source>
    </source>
</evidence>
<evidence type="ECO:0000303" key="3">
    <source>
    </source>
</evidence>
<evidence type="ECO:0000303" key="4">
    <source>
    </source>
</evidence>
<evidence type="ECO:0000305" key="5">
    <source>
    </source>
</evidence>
<evidence type="ECO:0000312" key="6">
    <source>
        <dbReference type="EMBL" id="EFJ98159.1"/>
    </source>
</evidence>
<evidence type="ECO:0007744" key="7">
    <source>
        <dbReference type="PDB" id="6P7O"/>
    </source>
</evidence>
<evidence type="ECO:0007744" key="8">
    <source>
        <dbReference type="PDB" id="6P7P"/>
    </source>
</evidence>
<evidence type="ECO:0007744" key="9">
    <source>
        <dbReference type="PDB" id="6P7Q"/>
    </source>
</evidence>
<evidence type="ECO:0007829" key="10">
    <source>
        <dbReference type="PDB" id="6P7O"/>
    </source>
</evidence>
<evidence type="ECO:0007829" key="11">
    <source>
        <dbReference type="PDB" id="6P7Q"/>
    </source>
</evidence>
<gene>
    <name evidence="3" type="primary">nucC</name>
    <name evidence="6" type="ORF">HMPREF9540_01761</name>
</gene>
<organism>
    <name type="scientific">Escherichia coli (strain MS 115-1)</name>
    <dbReference type="NCBI Taxonomy" id="749537"/>
    <lineage>
        <taxon>Bacteria</taxon>
        <taxon>Pseudomonadati</taxon>
        <taxon>Pseudomonadota</taxon>
        <taxon>Gammaproteobacteria</taxon>
        <taxon>Enterobacterales</taxon>
        <taxon>Enterobacteriaceae</taxon>
        <taxon>Escherichia</taxon>
    </lineage>
</organism>
<protein>
    <recommendedName>
        <fullName evidence="3">Endodeoxyribonuclease NucC</fullName>
        <ecNumber evidence="2">3.1.-.-</ecNumber>
    </recommendedName>
    <alternativeName>
        <fullName>NucC nuclease</fullName>
    </alternativeName>
</protein>
<feature type="chain" id="PRO_0000451845" description="Endodeoxyribonuclease NucC">
    <location>
        <begin position="1"/>
        <end position="241"/>
    </location>
</feature>
<feature type="active site" evidence="5">
    <location>
        <position position="73"/>
    </location>
</feature>
<feature type="active site" evidence="5">
    <location>
        <position position="104"/>
    </location>
</feature>
<feature type="active site" evidence="5">
    <location>
        <position position="106"/>
    </location>
</feature>
<feature type="binding site" evidence="1 7">
    <location>
        <position position="73"/>
    </location>
    <ligand>
        <name>Mg(2+)</name>
        <dbReference type="ChEBI" id="CHEBI:18420"/>
    </ligand>
</feature>
<feature type="binding site" evidence="1 7">
    <location>
        <position position="104"/>
    </location>
    <ligand>
        <name>Mg(2+)</name>
        <dbReference type="ChEBI" id="CHEBI:18420"/>
    </ligand>
</feature>
<feature type="site" description="Binds cAAA" evidence="1 8">
    <location>
        <position position="53"/>
    </location>
</feature>
<feature type="site" description="Binds cAAA" evidence="1 8">
    <location>
        <position position="81"/>
    </location>
</feature>
<feature type="site" description="Gate loop latch" evidence="1 8">
    <location>
        <position position="136"/>
    </location>
</feature>
<feature type="site" description="Gate loop latch" evidence="1 8">
    <location>
        <position position="141"/>
    </location>
</feature>
<feature type="site" description="Binds cAAA" evidence="1 8">
    <location>
        <position position="226"/>
    </location>
</feature>
<feature type="mutagenesis site" description="Decreased hexamer formation, retains endonuclease activity." evidence="1">
    <original>W</original>
    <variation>A</variation>
    <location>
        <position position="4"/>
    </location>
</feature>
<feature type="mutagenesis site" description="Wild-type hexamer and endonuclease activity." evidence="1">
    <original>L</original>
    <variation>A</variation>
    <location>
        <position position="19"/>
    </location>
</feature>
<feature type="mutagenesis site" description="No hexamer formation, no endonuclease activity." evidence="1">
    <original>L</original>
    <variation>D</variation>
    <location>
        <position position="19"/>
    </location>
</feature>
<feature type="mutagenesis site" description="No hexamer formation, no endonuclease activity." evidence="1">
    <original>A</original>
    <variation>E</variation>
    <variation>K</variation>
    <location>
        <position position="27"/>
    </location>
</feature>
<feature type="mutagenesis site" description="No hexamer formation, no endonuclease activity, no phage immunity." evidence="1">
    <original>F</original>
    <variation>A</variation>
    <location>
        <position position="28"/>
    </location>
</feature>
<feature type="mutagenesis site" description="Loss of endonuclease activity." evidence="1">
    <original>R</original>
    <variation>A</variation>
    <location>
        <position position="53"/>
    </location>
</feature>
<feature type="mutagenesis site" description="Loss of endonuclease activity, no phage immunity." evidence="1 2">
    <original>D</original>
    <variation>N</variation>
    <location>
        <position position="73"/>
    </location>
</feature>
<feature type="mutagenesis site" description="Loss of endonuclease activity." evidence="1">
    <original>Y</original>
    <variation>A</variation>
    <location>
        <position position="81"/>
    </location>
</feature>
<feature type="mutagenesis site" description="Loss of endonuclease activity." evidence="1">
    <original>H</original>
    <variation>A</variation>
    <location>
        <position position="136"/>
    </location>
</feature>
<feature type="mutagenesis site" description="Loss of endonuclease activity." evidence="1">
    <original>Y</original>
    <variation>A</variation>
    <location>
        <position position="141"/>
    </location>
</feature>
<feature type="mutagenesis site" description="Loss of endonuclease activity." evidence="1">
    <original>T</original>
    <variation>Y</variation>
    <location>
        <position position="226"/>
    </location>
</feature>
<feature type="helix" evidence="11">
    <location>
        <begin position="6"/>
        <end position="27"/>
    </location>
</feature>
<feature type="helix" evidence="11">
    <location>
        <begin position="31"/>
        <end position="49"/>
    </location>
</feature>
<feature type="strand" evidence="11">
    <location>
        <begin position="55"/>
        <end position="62"/>
    </location>
</feature>
<feature type="strand" evidence="11">
    <location>
        <begin position="72"/>
        <end position="77"/>
    </location>
</feature>
<feature type="turn" evidence="10">
    <location>
        <begin position="79"/>
        <end position="81"/>
    </location>
</feature>
<feature type="strand" evidence="11">
    <location>
        <begin position="85"/>
        <end position="88"/>
    </location>
</feature>
<feature type="strand" evidence="11">
    <location>
        <begin position="91"/>
        <end position="95"/>
    </location>
</feature>
<feature type="helix" evidence="11">
    <location>
        <begin position="96"/>
        <end position="98"/>
    </location>
</feature>
<feature type="strand" evidence="11">
    <location>
        <begin position="99"/>
        <end position="109"/>
    </location>
</feature>
<feature type="helix" evidence="11">
    <location>
        <begin position="111"/>
        <end position="125"/>
    </location>
</feature>
<feature type="strand" evidence="11">
    <location>
        <begin position="134"/>
        <end position="136"/>
    </location>
</feature>
<feature type="strand" evidence="11">
    <location>
        <begin position="139"/>
        <end position="141"/>
    </location>
</feature>
<feature type="strand" evidence="11">
    <location>
        <begin position="150"/>
        <end position="162"/>
    </location>
</feature>
<feature type="helix" evidence="11">
    <location>
        <begin position="166"/>
        <end position="172"/>
    </location>
</feature>
<feature type="strand" evidence="11">
    <location>
        <begin position="183"/>
        <end position="186"/>
    </location>
</feature>
<feature type="turn" evidence="11">
    <location>
        <begin position="187"/>
        <end position="189"/>
    </location>
</feature>
<feature type="strand" evidence="11">
    <location>
        <begin position="190"/>
        <end position="195"/>
    </location>
</feature>
<feature type="turn" evidence="11">
    <location>
        <begin position="196"/>
        <end position="199"/>
    </location>
</feature>
<feature type="strand" evidence="11">
    <location>
        <begin position="200"/>
        <end position="207"/>
    </location>
</feature>
<feature type="helix" evidence="11">
    <location>
        <begin position="209"/>
        <end position="224"/>
    </location>
</feature>
<feature type="helix" evidence="11">
    <location>
        <begin position="232"/>
        <end position="236"/>
    </location>
</feature>
<feature type="helix" evidence="11">
    <location>
        <begin position="237"/>
        <end position="239"/>
    </location>
</feature>
<accession>D7Y2H5</accession>
<comment type="function">
    <text evidence="1 2 4">Effector DNase of a CBASS antivirus system (PubMed:31932164, PubMed:31932165). CBASS (cyclic oligonucleotide-based antiphage signaling system) provides immunity against bacteriophage. The CD-NTase protein synthesizes cyclic nucleotides in response to infection; these serve as specific second messenger signals. The signals activate a diverse range of effectors, leading to bacterial cell death and thus abortive phage infection. A type III-C(AAA) CBASS system (PubMed:32839535).</text>
</comment>
<comment type="function">
    <text evidence="1 2">A cyclic nucleotide-activated dsDNase. In the presence of 3',3',3'-cyclic AMP-AMP-AMP (cAAA), and to a lesser extent 3',3',3'-cyclic AMP-AMP-GMP (cAAG) and cyclic-di-AMP (c-di-AMP), endonucleolytically degrades dsDNA (PubMed:31932164, PubMed:31932165). Binds one cAAA in a pocket on one surface of the trimer; cAAA binding promotes hexamerization, which is necessary for nuclease activation. Also binds c-diAMP or linear di-AMP with lower affinity. The nuclease digests dsDNA to about 50 bp lengths with a 2-base 3' overhang and a consensus recognition site of 5'-Axx|T-3'. DNA has been modeled to contact a pair of juxtaposed active sites (one from each layer of the hexamer), accounting for cleavage on both strands and the 2-base overhang (PubMed:31932164).</text>
</comment>
<comment type="function">
    <text evidence="1 2">Protects E.coli strain JP313 against bacteriophage lambda cI- infection. When the cdnC-cap7-cap6-nucC operon is transformed into a susceptible strain it confers bacteriophage immunity. Mutations in the sensor (Cap7 also called HORMA) or effector proteins (CdnC, NucC) but not the disassembly protein (Cap6 also called Trip13) no longer confer immunity. The presence of the intact operon leads to culture collapse and cell death which occurs before the phage has finished its replication cycle, thus protecting non-infected bacteria by aborting the phage infection and preventing its propagation.</text>
</comment>
<comment type="cofactor">
    <cofactor evidence="1 7">
        <name>Mg(2+)</name>
        <dbReference type="ChEBI" id="CHEBI:18420"/>
    </cofactor>
</comment>
<comment type="activity regulation">
    <text evidence="1 2">Activated by cAAA and to a lesser extent cAA and cAAG; cAAA and cAA are products of its cognate CD-NTase. Cyclic nucleotide binding causes hexamerization (PubMed:31932165). Cyclic nucleotide binding causes a series of shifts that enclose the cAAA molecule, enable hexamer formation and juxtapose pairs of active sites to allow dsDNA cleavage (PubMed:31932164).</text>
</comment>
<comment type="subunit">
    <text evidence="1 2">Self-oligomerizes (PubMed:31932165). Forms homotrimers; in the presence of cAAA the trimers associate face-to-face to form homohexamers. The 2 cAAA-binding sites are on the exterior of the hexamer at the three-way junction, there are maximally 2 cyclic nucleotides per hexamer (PubMed:31932164).</text>
</comment>
<comment type="similarity">
    <text evidence="5">Belongs to the NucC endonuclease family.</text>
</comment>
<sequence length="241" mass="26728">MSDWSLSQLFASLHEDIQLRLGTARKAFQHPGAKGDASEGVWIEMLDTYLPKRYQAANAFVVDSLGNFSDQIDVVVFDRQYSPFIFKFNEQIIVPAESVYAVFEAKQSASADLVAYAQRKVASVRRLHRTSLPIPHAGGTYPAKPLIPILGGLLTFESDWSPALGMSFDKALNGDLSDGRLDMGCVASHGHFYFNNIDSKFNFEHGNKPATAFLFRLIAQLQFSGTVPMIDIDAYGKWLAN</sequence>
<name>NUCC_ECOM1</name>
<dbReference type="EC" id="3.1.-.-" evidence="2"/>
<dbReference type="EMBL" id="ADTL01000141">
    <property type="protein sequence ID" value="EFJ98159.1"/>
    <property type="molecule type" value="Genomic_DNA"/>
</dbReference>
<dbReference type="RefSeq" id="WP_001286625.1">
    <property type="nucleotide sequence ID" value="NZ_GG771785.1"/>
</dbReference>
<dbReference type="PDB" id="6P7O">
    <property type="method" value="X-ray"/>
    <property type="resolution" value="1.75 A"/>
    <property type="chains" value="A=4-240"/>
</dbReference>
<dbReference type="PDB" id="6P7P">
    <property type="method" value="X-ray"/>
    <property type="resolution" value="1.67 A"/>
    <property type="chains" value="A/B/C=2-240"/>
</dbReference>
<dbReference type="PDB" id="6P7Q">
    <property type="method" value="X-ray"/>
    <property type="resolution" value="1.66 A"/>
    <property type="chains" value="A/B/C=2-240"/>
</dbReference>
<dbReference type="PDBsum" id="6P7O"/>
<dbReference type="PDBsum" id="6P7P"/>
<dbReference type="PDBsum" id="6P7Q"/>
<dbReference type="SMR" id="D7Y2H5"/>
<dbReference type="HOGENOM" id="CLU_078737_0_0_6"/>
<dbReference type="GO" id="GO:0004519">
    <property type="term" value="F:endonuclease activity"/>
    <property type="evidence" value="ECO:0007669"/>
    <property type="project" value="UniProtKB-KW"/>
</dbReference>
<dbReference type="GO" id="GO:0046872">
    <property type="term" value="F:metal ion binding"/>
    <property type="evidence" value="ECO:0007669"/>
    <property type="project" value="UniProtKB-KW"/>
</dbReference>
<dbReference type="GO" id="GO:0000166">
    <property type="term" value="F:nucleotide binding"/>
    <property type="evidence" value="ECO:0007669"/>
    <property type="project" value="UniProtKB-KW"/>
</dbReference>
<dbReference type="GO" id="GO:0051607">
    <property type="term" value="P:defense response to virus"/>
    <property type="evidence" value="ECO:0007669"/>
    <property type="project" value="UniProtKB-KW"/>
</dbReference>
<dbReference type="CDD" id="cd21411">
    <property type="entry name" value="NucC"/>
    <property type="match status" value="1"/>
</dbReference>
<dbReference type="InterPro" id="IPR046537">
    <property type="entry name" value="DUF6602"/>
</dbReference>
<dbReference type="Pfam" id="PF20247">
    <property type="entry name" value="DUF6602"/>
    <property type="match status" value="1"/>
</dbReference>